<organism>
    <name type="scientific">Dictyostelium discoideum</name>
    <name type="common">Social amoeba</name>
    <dbReference type="NCBI Taxonomy" id="44689"/>
    <lineage>
        <taxon>Eukaryota</taxon>
        <taxon>Amoebozoa</taxon>
        <taxon>Evosea</taxon>
        <taxon>Eumycetozoa</taxon>
        <taxon>Dictyostelia</taxon>
        <taxon>Dictyosteliales</taxon>
        <taxon>Dictyosteliaceae</taxon>
        <taxon>Dictyostelium</taxon>
    </lineage>
</organism>
<evidence type="ECO:0000250" key="1">
    <source>
        <dbReference type="UniProtKB" id="P54922"/>
    </source>
</evidence>
<evidence type="ECO:0000305" key="2"/>
<sequence>MFHKFISTLTNKKITQTIMGTINKENIKPAMLLSAFGDACGYKNGIWEFEKSPSRIYEHYEYLGGYKNLKINKKDWRLSDDTIMHIATAIAITRPTNTDNESICKELAKAYIHSMEDMAGRAPGIQTINSVSLMTQTGMRSKVYQWNEIDFSDRAGGCGGSMRSMCIGFKYWSDEQLDTLIELSIESGRITHNNPVGFLGALVSALFASYAIRSIPPKTWPLKLMTEVMPKAREYLEKTSNSSNRNIENYEKGWNYFWNSWKSYLKLRQIPSNPDELKAANDKGIDYPVFPKDYSDYKVRENFYHSISFSGWGGSSGHDSCIIAYDALLGSADNWEEMIKRSVLHGGDNDSTGAIGCCWWGALYGFNGVPECNYEKIEYKSIIEGLAKEISN</sequence>
<comment type="function">
    <text evidence="1">Specifically acts as an arginine mono-ADP-ribosylhydrolase by mediating the removal of mono-ADP-ribose attached to arginine residues on proteins.</text>
</comment>
<comment type="catalytic activity">
    <reaction evidence="1">
        <text>N(omega)-(ADP-D-ribosyl)-L-arginyl-[protein] + H2O = ADP-D-ribose + L-arginyl-[protein]</text>
        <dbReference type="Rhea" id="RHEA:14885"/>
        <dbReference type="Rhea" id="RHEA-COMP:10532"/>
        <dbReference type="Rhea" id="RHEA-COMP:15087"/>
        <dbReference type="ChEBI" id="CHEBI:15377"/>
        <dbReference type="ChEBI" id="CHEBI:29965"/>
        <dbReference type="ChEBI" id="CHEBI:57967"/>
        <dbReference type="ChEBI" id="CHEBI:142554"/>
        <dbReference type="EC" id="3.2.2.19"/>
    </reaction>
</comment>
<comment type="cofactor">
    <cofactor evidence="1">
        <name>Mg(2+)</name>
        <dbReference type="ChEBI" id="CHEBI:18420"/>
    </cofactor>
    <text evidence="1">Binds 2 magnesium ions per subunit.</text>
</comment>
<comment type="subunit">
    <text evidence="1">Monomer.</text>
</comment>
<comment type="similarity">
    <text evidence="2">Belongs to the ADP-ribosylglycohydrolase family.</text>
</comment>
<name>ADPRH_DICDI</name>
<protein>
    <recommendedName>
        <fullName evidence="2">ADP-ribosylhydrolase ARH1</fullName>
        <ecNumber evidence="1">3.2.2.19</ecNumber>
    </recommendedName>
    <alternativeName>
        <fullName>ADP-ribose-L-arginine cleaving enzyme</fullName>
    </alternativeName>
    <alternativeName>
        <fullName>[Protein ADP-ribosylarginine] hydrolase</fullName>
        <shortName>ADP-ribosylarginine hydrolase</shortName>
    </alternativeName>
</protein>
<proteinExistence type="inferred from homology"/>
<dbReference type="EC" id="3.2.2.19" evidence="1"/>
<dbReference type="EMBL" id="AAFI02000148">
    <property type="protein sequence ID" value="EAL62549.1"/>
    <property type="molecule type" value="Genomic_DNA"/>
</dbReference>
<dbReference type="RefSeq" id="XP_636047.1">
    <property type="nucleotide sequence ID" value="XM_630955.1"/>
</dbReference>
<dbReference type="SMR" id="Q54H71"/>
<dbReference type="FunCoup" id="Q54H71">
    <property type="interactions" value="1"/>
</dbReference>
<dbReference type="STRING" id="44689.Q54H71"/>
<dbReference type="PaxDb" id="44689-DDB0238599"/>
<dbReference type="EnsemblProtists" id="EAL62549">
    <property type="protein sequence ID" value="EAL62549"/>
    <property type="gene ID" value="DDB_G0289675"/>
</dbReference>
<dbReference type="GeneID" id="8627257"/>
<dbReference type="KEGG" id="ddi:DDB_G0289675"/>
<dbReference type="dictyBase" id="DDB_G0289675">
    <property type="gene designation" value="adprh"/>
</dbReference>
<dbReference type="VEuPathDB" id="AmoebaDB:DDB_G0289675"/>
<dbReference type="eggNOG" id="ENOG502QPMI">
    <property type="taxonomic scope" value="Eukaryota"/>
</dbReference>
<dbReference type="HOGENOM" id="CLU_047061_0_0_1"/>
<dbReference type="InParanoid" id="Q54H71"/>
<dbReference type="OMA" id="RKWEFLQ"/>
<dbReference type="PhylomeDB" id="Q54H71"/>
<dbReference type="PRO" id="PR:Q54H71"/>
<dbReference type="Proteomes" id="UP000002195">
    <property type="component" value="Chromosome 5"/>
</dbReference>
<dbReference type="GO" id="GO:0003875">
    <property type="term" value="F:ADP-ribosylarginine hydrolase activity"/>
    <property type="evidence" value="ECO:0000250"/>
    <property type="project" value="UniProtKB"/>
</dbReference>
<dbReference type="GO" id="GO:0046872">
    <property type="term" value="F:metal ion binding"/>
    <property type="evidence" value="ECO:0007669"/>
    <property type="project" value="UniProtKB-KW"/>
</dbReference>
<dbReference type="GO" id="GO:0036211">
    <property type="term" value="P:protein modification process"/>
    <property type="evidence" value="ECO:0000250"/>
    <property type="project" value="UniProtKB"/>
</dbReference>
<dbReference type="FunFam" id="1.10.4080.10:FF:000002">
    <property type="entry name" value="ADP-ribosylarginine hydrolase isoform X1"/>
    <property type="match status" value="1"/>
</dbReference>
<dbReference type="Gene3D" id="1.10.4080.10">
    <property type="entry name" value="ADP-ribosylation/Crystallin J1"/>
    <property type="match status" value="1"/>
</dbReference>
<dbReference type="InterPro" id="IPR050792">
    <property type="entry name" value="ADP-ribosylglycohydrolase"/>
</dbReference>
<dbReference type="InterPro" id="IPR005502">
    <property type="entry name" value="Ribosyl_crysJ1"/>
</dbReference>
<dbReference type="InterPro" id="IPR036705">
    <property type="entry name" value="Ribosyl_crysJ1_sf"/>
</dbReference>
<dbReference type="PANTHER" id="PTHR16222">
    <property type="entry name" value="ADP-RIBOSYLGLYCOHYDROLASE"/>
    <property type="match status" value="1"/>
</dbReference>
<dbReference type="PANTHER" id="PTHR16222:SF26">
    <property type="entry name" value="ADP-RIBOSYLHYDROLASE ARH1"/>
    <property type="match status" value="1"/>
</dbReference>
<dbReference type="Pfam" id="PF03747">
    <property type="entry name" value="ADP_ribosyl_GH"/>
    <property type="match status" value="1"/>
</dbReference>
<dbReference type="SUPFAM" id="SSF101478">
    <property type="entry name" value="ADP-ribosylglycohydrolase"/>
    <property type="match status" value="1"/>
</dbReference>
<feature type="chain" id="PRO_0000328209" description="ADP-ribosylhydrolase ARH1">
    <location>
        <begin position="1"/>
        <end position="392"/>
    </location>
</feature>
<feature type="region of interest" description="Substrate" evidence="1">
    <location>
        <begin position="125"/>
        <end position="127"/>
    </location>
</feature>
<feature type="region of interest" description="Substrate" evidence="1">
    <location>
        <begin position="192"/>
        <end position="194"/>
    </location>
</feature>
<feature type="region of interest" description="Substrate" evidence="1">
    <location>
        <begin position="309"/>
        <end position="311"/>
    </location>
</feature>
<feature type="region of interest" description="Substrate" evidence="1">
    <location>
        <begin position="315"/>
        <end position="316"/>
    </location>
</feature>
<feature type="binding site" evidence="1">
    <location>
        <position position="79"/>
    </location>
    <ligand>
        <name>Mg(2+)</name>
        <dbReference type="ChEBI" id="CHEBI:18420"/>
        <label>1</label>
    </ligand>
</feature>
<feature type="binding site" evidence="1">
    <location>
        <position position="80"/>
    </location>
    <ligand>
        <name>Mg(2+)</name>
        <dbReference type="ChEBI" id="CHEBI:18420"/>
        <label>1</label>
    </ligand>
</feature>
<feature type="binding site" evidence="1">
    <location>
        <position position="81"/>
    </location>
    <ligand>
        <name>Mg(2+)</name>
        <dbReference type="ChEBI" id="CHEBI:18420"/>
        <label>1</label>
    </ligand>
</feature>
<feature type="binding site" evidence="1">
    <location>
        <position position="109"/>
    </location>
    <ligand>
        <name>substrate</name>
    </ligand>
</feature>
<feature type="binding site" evidence="1">
    <location>
        <position position="159"/>
    </location>
    <ligand>
        <name>substrate</name>
    </ligand>
</feature>
<feature type="binding site" evidence="1">
    <location>
        <position position="348"/>
    </location>
    <ligand>
        <name>Mg(2+)</name>
        <dbReference type="ChEBI" id="CHEBI:18420"/>
        <label>2</label>
    </ligand>
</feature>
<feature type="binding site" evidence="1">
    <location>
        <position position="350"/>
    </location>
    <ligand>
        <name>Mg(2+)</name>
        <dbReference type="ChEBI" id="CHEBI:18420"/>
        <label>1</label>
    </ligand>
</feature>
<feature type="binding site" evidence="1">
    <location>
        <position position="350"/>
    </location>
    <ligand>
        <name>Mg(2+)</name>
        <dbReference type="ChEBI" id="CHEBI:18420"/>
        <label>2</label>
    </ligand>
</feature>
<feature type="binding site" evidence="1">
    <location>
        <position position="351"/>
    </location>
    <ligand>
        <name>Mg(2+)</name>
        <dbReference type="ChEBI" id="CHEBI:18420"/>
        <label>2</label>
    </ligand>
</feature>
<gene>
    <name type="primary">adprh</name>
    <name type="ORF">DDB_G0289675</name>
</gene>
<keyword id="KW-0378">Hydrolase</keyword>
<keyword id="KW-0460">Magnesium</keyword>
<keyword id="KW-0479">Metal-binding</keyword>
<keyword id="KW-1185">Reference proteome</keyword>
<reference key="1">
    <citation type="journal article" date="2005" name="Nature">
        <title>The genome of the social amoeba Dictyostelium discoideum.</title>
        <authorList>
            <person name="Eichinger L."/>
            <person name="Pachebat J.A."/>
            <person name="Gloeckner G."/>
            <person name="Rajandream M.A."/>
            <person name="Sucgang R."/>
            <person name="Berriman M."/>
            <person name="Song J."/>
            <person name="Olsen R."/>
            <person name="Szafranski K."/>
            <person name="Xu Q."/>
            <person name="Tunggal B."/>
            <person name="Kummerfeld S."/>
            <person name="Madera M."/>
            <person name="Konfortov B.A."/>
            <person name="Rivero F."/>
            <person name="Bankier A.T."/>
            <person name="Lehmann R."/>
            <person name="Hamlin N."/>
            <person name="Davies R."/>
            <person name="Gaudet P."/>
            <person name="Fey P."/>
            <person name="Pilcher K."/>
            <person name="Chen G."/>
            <person name="Saunders D."/>
            <person name="Sodergren E.J."/>
            <person name="Davis P."/>
            <person name="Kerhornou A."/>
            <person name="Nie X."/>
            <person name="Hall N."/>
            <person name="Anjard C."/>
            <person name="Hemphill L."/>
            <person name="Bason N."/>
            <person name="Farbrother P."/>
            <person name="Desany B."/>
            <person name="Just E."/>
            <person name="Morio T."/>
            <person name="Rost R."/>
            <person name="Churcher C.M."/>
            <person name="Cooper J."/>
            <person name="Haydock S."/>
            <person name="van Driessche N."/>
            <person name="Cronin A."/>
            <person name="Goodhead I."/>
            <person name="Muzny D.M."/>
            <person name="Mourier T."/>
            <person name="Pain A."/>
            <person name="Lu M."/>
            <person name="Harper D."/>
            <person name="Lindsay R."/>
            <person name="Hauser H."/>
            <person name="James K.D."/>
            <person name="Quiles M."/>
            <person name="Madan Babu M."/>
            <person name="Saito T."/>
            <person name="Buchrieser C."/>
            <person name="Wardroper A."/>
            <person name="Felder M."/>
            <person name="Thangavelu M."/>
            <person name="Johnson D."/>
            <person name="Knights A."/>
            <person name="Loulseged H."/>
            <person name="Mungall K.L."/>
            <person name="Oliver K."/>
            <person name="Price C."/>
            <person name="Quail M.A."/>
            <person name="Urushihara H."/>
            <person name="Hernandez J."/>
            <person name="Rabbinowitsch E."/>
            <person name="Steffen D."/>
            <person name="Sanders M."/>
            <person name="Ma J."/>
            <person name="Kohara Y."/>
            <person name="Sharp S."/>
            <person name="Simmonds M.N."/>
            <person name="Spiegler S."/>
            <person name="Tivey A."/>
            <person name="Sugano S."/>
            <person name="White B."/>
            <person name="Walker D."/>
            <person name="Woodward J.R."/>
            <person name="Winckler T."/>
            <person name="Tanaka Y."/>
            <person name="Shaulsky G."/>
            <person name="Schleicher M."/>
            <person name="Weinstock G.M."/>
            <person name="Rosenthal A."/>
            <person name="Cox E.C."/>
            <person name="Chisholm R.L."/>
            <person name="Gibbs R.A."/>
            <person name="Loomis W.F."/>
            <person name="Platzer M."/>
            <person name="Kay R.R."/>
            <person name="Williams J.G."/>
            <person name="Dear P.H."/>
            <person name="Noegel A.A."/>
            <person name="Barrell B.G."/>
            <person name="Kuspa A."/>
        </authorList>
    </citation>
    <scope>NUCLEOTIDE SEQUENCE [LARGE SCALE GENOMIC DNA]</scope>
    <source>
        <strain>AX4</strain>
    </source>
</reference>
<accession>Q54H71</accession>